<feature type="chain" id="PRO_0000341167" description="D-alanine--D-alanine ligase">
    <location>
        <begin position="1"/>
        <end position="308"/>
    </location>
</feature>
<feature type="domain" description="ATP-grasp" evidence="2">
    <location>
        <begin position="103"/>
        <end position="302"/>
    </location>
</feature>
<feature type="binding site" evidence="2">
    <location>
        <begin position="130"/>
        <end position="184"/>
    </location>
    <ligand>
        <name>ATP</name>
        <dbReference type="ChEBI" id="CHEBI:30616"/>
    </ligand>
</feature>
<feature type="binding site" evidence="2">
    <location>
        <position position="252"/>
    </location>
    <ligand>
        <name>Mg(2+)</name>
        <dbReference type="ChEBI" id="CHEBI:18420"/>
        <label>1</label>
    </ligand>
</feature>
<feature type="binding site" evidence="2">
    <location>
        <position position="269"/>
    </location>
    <ligand>
        <name>Mg(2+)</name>
        <dbReference type="ChEBI" id="CHEBI:18420"/>
        <label>1</label>
    </ligand>
</feature>
<feature type="binding site" evidence="2">
    <location>
        <position position="269"/>
    </location>
    <ligand>
        <name>Mg(2+)</name>
        <dbReference type="ChEBI" id="CHEBI:18420"/>
        <label>2</label>
    </ligand>
</feature>
<feature type="binding site" evidence="2">
    <location>
        <position position="271"/>
    </location>
    <ligand>
        <name>Mg(2+)</name>
        <dbReference type="ChEBI" id="CHEBI:18420"/>
        <label>2</label>
    </ligand>
</feature>
<name>DDL_RHOPB</name>
<sequence>MTKRKHVAVLLGGWSSEREVSLRSGKACADALERCGYQVTRVDVQRNIGTVLDQLKPDVALVMLHGRPGEDGTIQGVLETLGIPYSHSGVLASALAMQKDLAKTVMATAGVPVAEGLTLSRAEVAKRHVMAPPYVIKPVADGSSVGVFMVTEAHEHPPQELFRDDWPHGEQLLVEKYVAGKELTCAVVKGEPTGVIEIVQTNKFYDYEAKYSPGGSNHILPASLLPFVYQEVRRLTLAAHVALGCRGVSRADFRFDDRIEGTAGLICLEVNTQPGMTETSLVPELAADAGITFDELVQWMVEDASLGR</sequence>
<comment type="function">
    <text evidence="2">Cell wall formation.</text>
</comment>
<comment type="catalytic activity">
    <reaction evidence="2">
        <text>2 D-alanine + ATP = D-alanyl-D-alanine + ADP + phosphate + H(+)</text>
        <dbReference type="Rhea" id="RHEA:11224"/>
        <dbReference type="ChEBI" id="CHEBI:15378"/>
        <dbReference type="ChEBI" id="CHEBI:30616"/>
        <dbReference type="ChEBI" id="CHEBI:43474"/>
        <dbReference type="ChEBI" id="CHEBI:57416"/>
        <dbReference type="ChEBI" id="CHEBI:57822"/>
        <dbReference type="ChEBI" id="CHEBI:456216"/>
        <dbReference type="EC" id="6.3.2.4"/>
    </reaction>
</comment>
<comment type="cofactor">
    <cofactor evidence="1">
        <name>Mg(2+)</name>
        <dbReference type="ChEBI" id="CHEBI:18420"/>
    </cofactor>
    <cofactor evidence="1">
        <name>Mn(2+)</name>
        <dbReference type="ChEBI" id="CHEBI:29035"/>
    </cofactor>
    <text evidence="1">Binds 2 magnesium or manganese ions per subunit.</text>
</comment>
<comment type="pathway">
    <text evidence="2">Cell wall biogenesis; peptidoglycan biosynthesis.</text>
</comment>
<comment type="subcellular location">
    <subcellularLocation>
        <location evidence="2">Cytoplasm</location>
    </subcellularLocation>
</comment>
<comment type="similarity">
    <text evidence="2">Belongs to the D-alanine--D-alanine ligase family.</text>
</comment>
<protein>
    <recommendedName>
        <fullName evidence="2">D-alanine--D-alanine ligase</fullName>
        <ecNumber evidence="2">6.3.2.4</ecNumber>
    </recommendedName>
    <alternativeName>
        <fullName evidence="2">D-Ala-D-Ala ligase</fullName>
    </alternativeName>
    <alternativeName>
        <fullName evidence="2">D-alanylalanine synthetase</fullName>
    </alternativeName>
</protein>
<reference key="1">
    <citation type="submission" date="2006-03" db="EMBL/GenBank/DDBJ databases">
        <title>Complete sequence of Rhodopseudomonas palustris BisB18.</title>
        <authorList>
            <consortium name="US DOE Joint Genome Institute"/>
            <person name="Copeland A."/>
            <person name="Lucas S."/>
            <person name="Lapidus A."/>
            <person name="Barry K."/>
            <person name="Detter J.C."/>
            <person name="Glavina del Rio T."/>
            <person name="Hammon N."/>
            <person name="Israni S."/>
            <person name="Dalin E."/>
            <person name="Tice H."/>
            <person name="Pitluck S."/>
            <person name="Chain P."/>
            <person name="Malfatti S."/>
            <person name="Shin M."/>
            <person name="Vergez L."/>
            <person name="Schmutz J."/>
            <person name="Larimer F."/>
            <person name="Land M."/>
            <person name="Hauser L."/>
            <person name="Pelletier D.A."/>
            <person name="Kyrpides N."/>
            <person name="Anderson I."/>
            <person name="Oda Y."/>
            <person name="Harwood C.S."/>
            <person name="Richardson P."/>
        </authorList>
    </citation>
    <scope>NUCLEOTIDE SEQUENCE [LARGE SCALE GENOMIC DNA]</scope>
    <source>
        <strain>BisB18</strain>
    </source>
</reference>
<dbReference type="EC" id="6.3.2.4" evidence="2"/>
<dbReference type="EMBL" id="CP000301">
    <property type="protein sequence ID" value="ABD88843.1"/>
    <property type="molecule type" value="Genomic_DNA"/>
</dbReference>
<dbReference type="SMR" id="Q211U3"/>
<dbReference type="STRING" id="316056.RPC_3301"/>
<dbReference type="KEGG" id="rpc:RPC_3301"/>
<dbReference type="eggNOG" id="COG1181">
    <property type="taxonomic scope" value="Bacteria"/>
</dbReference>
<dbReference type="HOGENOM" id="CLU_039268_1_1_5"/>
<dbReference type="OrthoDB" id="9813261at2"/>
<dbReference type="UniPathway" id="UPA00219"/>
<dbReference type="GO" id="GO:0005737">
    <property type="term" value="C:cytoplasm"/>
    <property type="evidence" value="ECO:0007669"/>
    <property type="project" value="UniProtKB-SubCell"/>
</dbReference>
<dbReference type="GO" id="GO:0005524">
    <property type="term" value="F:ATP binding"/>
    <property type="evidence" value="ECO:0007669"/>
    <property type="project" value="UniProtKB-KW"/>
</dbReference>
<dbReference type="GO" id="GO:0008716">
    <property type="term" value="F:D-alanine-D-alanine ligase activity"/>
    <property type="evidence" value="ECO:0007669"/>
    <property type="project" value="UniProtKB-UniRule"/>
</dbReference>
<dbReference type="GO" id="GO:0046872">
    <property type="term" value="F:metal ion binding"/>
    <property type="evidence" value="ECO:0007669"/>
    <property type="project" value="UniProtKB-KW"/>
</dbReference>
<dbReference type="GO" id="GO:0071555">
    <property type="term" value="P:cell wall organization"/>
    <property type="evidence" value="ECO:0007669"/>
    <property type="project" value="UniProtKB-KW"/>
</dbReference>
<dbReference type="GO" id="GO:0009252">
    <property type="term" value="P:peptidoglycan biosynthetic process"/>
    <property type="evidence" value="ECO:0007669"/>
    <property type="project" value="UniProtKB-UniRule"/>
</dbReference>
<dbReference type="GO" id="GO:0008360">
    <property type="term" value="P:regulation of cell shape"/>
    <property type="evidence" value="ECO:0007669"/>
    <property type="project" value="UniProtKB-KW"/>
</dbReference>
<dbReference type="Gene3D" id="3.40.50.20">
    <property type="match status" value="1"/>
</dbReference>
<dbReference type="Gene3D" id="3.30.1490.20">
    <property type="entry name" value="ATP-grasp fold, A domain"/>
    <property type="match status" value="1"/>
</dbReference>
<dbReference type="Gene3D" id="3.30.470.20">
    <property type="entry name" value="ATP-grasp fold, B domain"/>
    <property type="match status" value="1"/>
</dbReference>
<dbReference type="HAMAP" id="MF_00047">
    <property type="entry name" value="Dala_Dala_lig"/>
    <property type="match status" value="1"/>
</dbReference>
<dbReference type="InterPro" id="IPR011761">
    <property type="entry name" value="ATP-grasp"/>
</dbReference>
<dbReference type="InterPro" id="IPR013815">
    <property type="entry name" value="ATP_grasp_subdomain_1"/>
</dbReference>
<dbReference type="InterPro" id="IPR000291">
    <property type="entry name" value="D-Ala_lig_Van_CS"/>
</dbReference>
<dbReference type="InterPro" id="IPR005905">
    <property type="entry name" value="D_ala_D_ala"/>
</dbReference>
<dbReference type="InterPro" id="IPR011095">
    <property type="entry name" value="Dala_Dala_lig_C"/>
</dbReference>
<dbReference type="InterPro" id="IPR011127">
    <property type="entry name" value="Dala_Dala_lig_N"/>
</dbReference>
<dbReference type="InterPro" id="IPR016185">
    <property type="entry name" value="PreATP-grasp_dom_sf"/>
</dbReference>
<dbReference type="NCBIfam" id="TIGR01205">
    <property type="entry name" value="D_ala_D_alaTIGR"/>
    <property type="match status" value="1"/>
</dbReference>
<dbReference type="NCBIfam" id="NF002378">
    <property type="entry name" value="PRK01372.1"/>
    <property type="match status" value="1"/>
</dbReference>
<dbReference type="PANTHER" id="PTHR23132">
    <property type="entry name" value="D-ALANINE--D-ALANINE LIGASE"/>
    <property type="match status" value="1"/>
</dbReference>
<dbReference type="PANTHER" id="PTHR23132:SF23">
    <property type="entry name" value="D-ALANINE--D-ALANINE LIGASE B"/>
    <property type="match status" value="1"/>
</dbReference>
<dbReference type="Pfam" id="PF07478">
    <property type="entry name" value="Dala_Dala_lig_C"/>
    <property type="match status" value="1"/>
</dbReference>
<dbReference type="Pfam" id="PF01820">
    <property type="entry name" value="Dala_Dala_lig_N"/>
    <property type="match status" value="1"/>
</dbReference>
<dbReference type="PIRSF" id="PIRSF039102">
    <property type="entry name" value="Ddl/VanB"/>
    <property type="match status" value="1"/>
</dbReference>
<dbReference type="SUPFAM" id="SSF56059">
    <property type="entry name" value="Glutathione synthetase ATP-binding domain-like"/>
    <property type="match status" value="1"/>
</dbReference>
<dbReference type="SUPFAM" id="SSF52440">
    <property type="entry name" value="PreATP-grasp domain"/>
    <property type="match status" value="1"/>
</dbReference>
<dbReference type="PROSITE" id="PS50975">
    <property type="entry name" value="ATP_GRASP"/>
    <property type="match status" value="1"/>
</dbReference>
<dbReference type="PROSITE" id="PS00843">
    <property type="entry name" value="DALA_DALA_LIGASE_1"/>
    <property type="match status" value="1"/>
</dbReference>
<dbReference type="PROSITE" id="PS00844">
    <property type="entry name" value="DALA_DALA_LIGASE_2"/>
    <property type="match status" value="1"/>
</dbReference>
<accession>Q211U3</accession>
<organism>
    <name type="scientific">Rhodopseudomonas palustris (strain BisB18)</name>
    <dbReference type="NCBI Taxonomy" id="316056"/>
    <lineage>
        <taxon>Bacteria</taxon>
        <taxon>Pseudomonadati</taxon>
        <taxon>Pseudomonadota</taxon>
        <taxon>Alphaproteobacteria</taxon>
        <taxon>Hyphomicrobiales</taxon>
        <taxon>Nitrobacteraceae</taxon>
        <taxon>Rhodopseudomonas</taxon>
    </lineage>
</organism>
<gene>
    <name evidence="2" type="primary">ddl</name>
    <name type="ordered locus">RPC_3301</name>
</gene>
<evidence type="ECO:0000250" key="1"/>
<evidence type="ECO:0000255" key="2">
    <source>
        <dbReference type="HAMAP-Rule" id="MF_00047"/>
    </source>
</evidence>
<keyword id="KW-0067">ATP-binding</keyword>
<keyword id="KW-0133">Cell shape</keyword>
<keyword id="KW-0961">Cell wall biogenesis/degradation</keyword>
<keyword id="KW-0963">Cytoplasm</keyword>
<keyword id="KW-0436">Ligase</keyword>
<keyword id="KW-0460">Magnesium</keyword>
<keyword id="KW-0464">Manganese</keyword>
<keyword id="KW-0479">Metal-binding</keyword>
<keyword id="KW-0547">Nucleotide-binding</keyword>
<keyword id="KW-0573">Peptidoglycan synthesis</keyword>
<proteinExistence type="inferred from homology"/>